<keyword id="KW-0997">Cell inner membrane</keyword>
<keyword id="KW-1003">Cell membrane</keyword>
<keyword id="KW-0407">Ion channel</keyword>
<keyword id="KW-0406">Ion transport</keyword>
<keyword id="KW-0472">Membrane</keyword>
<keyword id="KW-1185">Reference proteome</keyword>
<keyword id="KW-0812">Transmembrane</keyword>
<keyword id="KW-1133">Transmembrane helix</keyword>
<keyword id="KW-0813">Transport</keyword>
<comment type="function">
    <text evidence="1">Channel that opens in response to stretch forces in the membrane lipid bilayer. May participate in the regulation of osmotic pressure changes within the cell.</text>
</comment>
<comment type="subunit">
    <text evidence="1">Homopentamer.</text>
</comment>
<comment type="subcellular location">
    <subcellularLocation>
        <location evidence="1">Cell inner membrane</location>
        <topology evidence="1">Multi-pass membrane protein</topology>
    </subcellularLocation>
</comment>
<comment type="similarity">
    <text evidence="1">Belongs to the MscL family.</text>
</comment>
<comment type="sequence caution" evidence="2">
    <conflict type="erroneous initiation">
        <sequence resource="EMBL-CDS" id="BAC50336"/>
    </conflict>
</comment>
<reference key="1">
    <citation type="journal article" date="2002" name="DNA Res.">
        <title>Complete genomic sequence of nitrogen-fixing symbiotic bacterium Bradyrhizobium japonicum USDA110.</title>
        <authorList>
            <person name="Kaneko T."/>
            <person name="Nakamura Y."/>
            <person name="Sato S."/>
            <person name="Minamisawa K."/>
            <person name="Uchiumi T."/>
            <person name="Sasamoto S."/>
            <person name="Watanabe A."/>
            <person name="Idesawa K."/>
            <person name="Iriguchi M."/>
            <person name="Kawashima K."/>
            <person name="Kohara M."/>
            <person name="Matsumoto M."/>
            <person name="Shimpo S."/>
            <person name="Tsuruoka H."/>
            <person name="Wada T."/>
            <person name="Yamada M."/>
            <person name="Tabata S."/>
        </authorList>
    </citation>
    <scope>NUCLEOTIDE SEQUENCE [LARGE SCALE GENOMIC DNA]</scope>
    <source>
        <strain>JCM 10833 / BCRC 13528 / IAM 13628 / NBRC 14792 / USDA 110</strain>
    </source>
</reference>
<feature type="chain" id="PRO_0000237984" description="Large-conductance mechanosensitive channel">
    <location>
        <begin position="1"/>
        <end position="138"/>
    </location>
</feature>
<feature type="transmembrane region" description="Helical" evidence="1">
    <location>
        <begin position="19"/>
        <end position="39"/>
    </location>
</feature>
<feature type="transmembrane region" description="Helical" evidence="1">
    <location>
        <begin position="81"/>
        <end position="101"/>
    </location>
</feature>
<name>MSCL_BRADU</name>
<dbReference type="EMBL" id="BA000040">
    <property type="protein sequence ID" value="BAC50336.1"/>
    <property type="status" value="ALT_INIT"/>
    <property type="molecule type" value="Genomic_DNA"/>
</dbReference>
<dbReference type="RefSeq" id="NP_771711.1">
    <property type="nucleotide sequence ID" value="NC_004463.1"/>
</dbReference>
<dbReference type="RefSeq" id="WP_027547170.1">
    <property type="nucleotide sequence ID" value="NC_004463.1"/>
</dbReference>
<dbReference type="SMR" id="Q89K46"/>
<dbReference type="FunCoup" id="Q89K46">
    <property type="interactions" value="416"/>
</dbReference>
<dbReference type="STRING" id="224911.AAV28_22725"/>
<dbReference type="EnsemblBacteria" id="BAC50336">
    <property type="protein sequence ID" value="BAC50336"/>
    <property type="gene ID" value="BAC50336"/>
</dbReference>
<dbReference type="GeneID" id="46492078"/>
<dbReference type="KEGG" id="bja:bll5071"/>
<dbReference type="PATRIC" id="fig|224911.44.peg.4939"/>
<dbReference type="eggNOG" id="COG1970">
    <property type="taxonomic scope" value="Bacteria"/>
</dbReference>
<dbReference type="HOGENOM" id="CLU_095787_0_1_5"/>
<dbReference type="InParanoid" id="Q89K46"/>
<dbReference type="OrthoDB" id="9810350at2"/>
<dbReference type="Proteomes" id="UP000002526">
    <property type="component" value="Chromosome"/>
</dbReference>
<dbReference type="GO" id="GO:0016020">
    <property type="term" value="C:membrane"/>
    <property type="evidence" value="ECO:0000318"/>
    <property type="project" value="GO_Central"/>
</dbReference>
<dbReference type="GO" id="GO:0005886">
    <property type="term" value="C:plasma membrane"/>
    <property type="evidence" value="ECO:0007669"/>
    <property type="project" value="UniProtKB-SubCell"/>
</dbReference>
<dbReference type="GO" id="GO:0008381">
    <property type="term" value="F:mechanosensitive monoatomic ion channel activity"/>
    <property type="evidence" value="ECO:0000318"/>
    <property type="project" value="GO_Central"/>
</dbReference>
<dbReference type="GO" id="GO:0006811">
    <property type="term" value="P:monoatomic ion transport"/>
    <property type="evidence" value="ECO:0000318"/>
    <property type="project" value="GO_Central"/>
</dbReference>
<dbReference type="FunFam" id="1.10.1200.120:FF:000001">
    <property type="entry name" value="Large-conductance mechanosensitive channel"/>
    <property type="match status" value="1"/>
</dbReference>
<dbReference type="Gene3D" id="1.10.1200.120">
    <property type="entry name" value="Large-conductance mechanosensitive channel, MscL, domain 1"/>
    <property type="match status" value="1"/>
</dbReference>
<dbReference type="HAMAP" id="MF_00115">
    <property type="entry name" value="MscL"/>
    <property type="match status" value="1"/>
</dbReference>
<dbReference type="InterPro" id="IPR019823">
    <property type="entry name" value="Mechanosensitive_channel_CS"/>
</dbReference>
<dbReference type="InterPro" id="IPR001185">
    <property type="entry name" value="MS_channel"/>
</dbReference>
<dbReference type="InterPro" id="IPR037673">
    <property type="entry name" value="MSC/AndL"/>
</dbReference>
<dbReference type="InterPro" id="IPR036019">
    <property type="entry name" value="MscL_channel"/>
</dbReference>
<dbReference type="NCBIfam" id="TIGR00220">
    <property type="entry name" value="mscL"/>
    <property type="match status" value="1"/>
</dbReference>
<dbReference type="NCBIfam" id="NF001843">
    <property type="entry name" value="PRK00567.1-4"/>
    <property type="match status" value="1"/>
</dbReference>
<dbReference type="NCBIfam" id="NF010557">
    <property type="entry name" value="PRK13952.1"/>
    <property type="match status" value="1"/>
</dbReference>
<dbReference type="PANTHER" id="PTHR30266:SF2">
    <property type="entry name" value="LARGE-CONDUCTANCE MECHANOSENSITIVE CHANNEL"/>
    <property type="match status" value="1"/>
</dbReference>
<dbReference type="PANTHER" id="PTHR30266">
    <property type="entry name" value="MECHANOSENSITIVE CHANNEL MSCL"/>
    <property type="match status" value="1"/>
</dbReference>
<dbReference type="Pfam" id="PF01741">
    <property type="entry name" value="MscL"/>
    <property type="match status" value="1"/>
</dbReference>
<dbReference type="PRINTS" id="PR01264">
    <property type="entry name" value="MECHCHANNEL"/>
</dbReference>
<dbReference type="SUPFAM" id="SSF81330">
    <property type="entry name" value="Gated mechanosensitive channel"/>
    <property type="match status" value="1"/>
</dbReference>
<dbReference type="PROSITE" id="PS01327">
    <property type="entry name" value="MSCL"/>
    <property type="match status" value="1"/>
</dbReference>
<accession>Q89K46</accession>
<proteinExistence type="inferred from homology"/>
<sequence>MLKEFREFAMKGNVVDLAVGVIIGAAFGAIVTSLVGDVIMPLIGAVTGGLDFSNYFTPLSKAVTATNLADAKKQGAVLAWGSFLTLTINFIIIAFVLFLVIRAINTLKRKEEAAPAAPPKPSAEVELLTEIRDLLKKS</sequence>
<gene>
    <name evidence="1" type="primary">mscL</name>
    <name type="ordered locus">bll5071</name>
</gene>
<protein>
    <recommendedName>
        <fullName evidence="1">Large-conductance mechanosensitive channel</fullName>
    </recommendedName>
</protein>
<evidence type="ECO:0000255" key="1">
    <source>
        <dbReference type="HAMAP-Rule" id="MF_00115"/>
    </source>
</evidence>
<evidence type="ECO:0000305" key="2"/>
<organism>
    <name type="scientific">Bradyrhizobium diazoefficiens (strain JCM 10833 / BCRC 13528 / IAM 13628 / NBRC 14792 / USDA 110)</name>
    <dbReference type="NCBI Taxonomy" id="224911"/>
    <lineage>
        <taxon>Bacteria</taxon>
        <taxon>Pseudomonadati</taxon>
        <taxon>Pseudomonadota</taxon>
        <taxon>Alphaproteobacteria</taxon>
        <taxon>Hyphomicrobiales</taxon>
        <taxon>Nitrobacteraceae</taxon>
        <taxon>Bradyrhizobium</taxon>
    </lineage>
</organism>